<keyword id="KW-0193">Cuticle</keyword>
<keyword id="KW-0903">Direct protein sequencing</keyword>
<organism>
    <name type="scientific">Cancer pagurus</name>
    <name type="common">Rock crab</name>
    <dbReference type="NCBI Taxonomy" id="6755"/>
    <lineage>
        <taxon>Eukaryota</taxon>
        <taxon>Metazoa</taxon>
        <taxon>Ecdysozoa</taxon>
        <taxon>Arthropoda</taxon>
        <taxon>Crustacea</taxon>
        <taxon>Multicrustacea</taxon>
        <taxon>Malacostraca</taxon>
        <taxon>Eumalacostraca</taxon>
        <taxon>Eucarida</taxon>
        <taxon>Decapoda</taxon>
        <taxon>Pleocyemata</taxon>
        <taxon>Brachyura</taxon>
        <taxon>Eubrachyura</taxon>
        <taxon>Cancroidea</taxon>
        <taxon>Cancridae</taxon>
        <taxon>Cancer</taxon>
    </lineage>
</organism>
<dbReference type="GO" id="GO:0042302">
    <property type="term" value="F:structural constituent of cuticle"/>
    <property type="evidence" value="ECO:0007669"/>
    <property type="project" value="UniProtKB-KW"/>
</dbReference>
<dbReference type="InterPro" id="IPR000618">
    <property type="entry name" value="Insect_cuticle"/>
</dbReference>
<dbReference type="Pfam" id="PF00379">
    <property type="entry name" value="Chitin_bind_4"/>
    <property type="match status" value="1"/>
</dbReference>
<dbReference type="PROSITE" id="PS51155">
    <property type="entry name" value="CHIT_BIND_RR_2"/>
    <property type="match status" value="1"/>
</dbReference>
<proteinExistence type="evidence at protein level"/>
<sequence length="51" mass="5750">GDIIDVDNDLFEHEQDGVAGTSVHGEYEAYDAYGNEYEVKYIADHLGFRVL</sequence>
<reference key="1">
    <citation type="journal article" date="1999" name="Comp. Biochem. Physiol.">
        <title>Exoskeletal proteins from the crab, Cancer pagurus.</title>
        <authorList>
            <person name="Andersen S.O."/>
        </authorList>
    </citation>
    <scope>PROTEIN SEQUENCE</scope>
    <scope>MASS SPECTROMETRY</scope>
    <source>
        <tissue>Carapace cuticle</tissue>
    </source>
</reference>
<feature type="chain" id="PRO_0000196170" description="Cuticle protein CP575">
    <location>
        <begin position="1"/>
        <end position="51"/>
    </location>
</feature>
<feature type="domain" description="Chitin-binding type R&amp;R" evidence="1">
    <location>
        <begin position="1"/>
        <end position="51"/>
    </location>
</feature>
<comment type="tissue specificity">
    <text>Calcified shell.</text>
</comment>
<comment type="mass spectrometry" mass="5748.8" method="Plasma desorption" evidence="2"/>
<accession>P81589</accession>
<protein>
    <recommendedName>
        <fullName>Cuticle protein CP575</fullName>
        <shortName>CPCP575</shortName>
    </recommendedName>
</protein>
<name>CUC11_CANPG</name>
<evidence type="ECO:0000255" key="1">
    <source>
        <dbReference type="PROSITE-ProRule" id="PRU00497"/>
    </source>
</evidence>
<evidence type="ECO:0000269" key="2">
    <source>
    </source>
</evidence>